<reference key="1">
    <citation type="journal article" date="2003" name="Genes Dev.">
        <title>The highly conserved Ndc80 complex is required for kinetochore assembly, chromosome congression, and spindle checkpoint activity.</title>
        <authorList>
            <person name="McCleland M.L."/>
            <person name="Gardner R.D."/>
            <person name="Kallio M.J."/>
            <person name="Daum J.R."/>
            <person name="Gorbsky G.J."/>
            <person name="Burke D.J."/>
            <person name="Stukenberg P.T."/>
        </authorList>
    </citation>
    <scope>NUCLEOTIDE SEQUENCE [MRNA]</scope>
    <scope>FUNCTION</scope>
    <scope>INTERACTION WITH CDCA1</scope>
    <scope>SUBCELLULAR LOCATION</scope>
</reference>
<reference key="2">
    <citation type="submission" date="2004-05" db="EMBL/GenBank/DDBJ databases">
        <authorList>
            <consortium name="NIH - Xenopus Gene Collection (XGC) project"/>
        </authorList>
    </citation>
    <scope>NUCLEOTIDE SEQUENCE [LARGE SCALE MRNA]</scope>
    <source>
        <tissue>Oocyte</tissue>
    </source>
</reference>
<reference key="3">
    <citation type="journal article" date="2004" name="Curr. Biol.">
        <title>The vertebrate Ndc80 complex contains Spc24 and Spc25 homologs, which are required to establish and maintain kinetochore-microtubule attachment.</title>
        <authorList>
            <person name="McCleland M.L."/>
            <person name="Kallio M.J."/>
            <person name="Barrett-Wilt G.A."/>
            <person name="Kestner C.A."/>
            <person name="Shabanowitz J."/>
            <person name="Hunt D.F."/>
            <person name="Gorbsky G.J."/>
            <person name="Stukenberg P.T."/>
        </authorList>
    </citation>
    <scope>FUNCTION</scope>
    <scope>IDENTIFICATION BY MASS SPECTROMETRY</scope>
    <scope>IDENTIFICATION IN THE NDC80 COMPLEX</scope>
</reference>
<reference key="4">
    <citation type="journal article" date="2005" name="Mol. Biol. Cell">
        <title>Measuring the stoichiometry and physical interactions between components elucidates the architecture of the vertebrate kinetochore.</title>
        <authorList>
            <person name="Emanuele M.J."/>
            <person name="McCleland M.L."/>
            <person name="Satinover D.L."/>
            <person name="Stukenberg P.T."/>
        </authorList>
    </citation>
    <scope>CHARACTERIZATION OF THE NDC80 COMPLEX</scope>
    <scope>INTERACTION OF THE NDC80 COMPLEX WITH MIS12 AND ZWINT</scope>
</reference>
<reference key="5">
    <citation type="journal article" date="2007" name="Cell">
        <title>Xenopus Cep57 is a novel kinetochore component involved in microtubule attachment.</title>
        <authorList>
            <person name="Emanuele M.J."/>
            <person name="Stukenberg P.T."/>
        </authorList>
    </citation>
    <scope>INTERACTION WITH CEP57R</scope>
</reference>
<organism>
    <name type="scientific">Xenopus laevis</name>
    <name type="common">African clawed frog</name>
    <dbReference type="NCBI Taxonomy" id="8355"/>
    <lineage>
        <taxon>Eukaryota</taxon>
        <taxon>Metazoa</taxon>
        <taxon>Chordata</taxon>
        <taxon>Craniata</taxon>
        <taxon>Vertebrata</taxon>
        <taxon>Euteleostomi</taxon>
        <taxon>Amphibia</taxon>
        <taxon>Batrachia</taxon>
        <taxon>Anura</taxon>
        <taxon>Pipoidea</taxon>
        <taxon>Pipidae</taxon>
        <taxon>Xenopodinae</taxon>
        <taxon>Xenopus</taxon>
        <taxon>Xenopus</taxon>
    </lineage>
</organism>
<accession>Q8AWF5</accession>
<accession>Q6NRM2</accession>
<sequence>MRRSSVTNRQSLLPLRVQDANRMGLTTPQNKDRQGFGKLSMSKPHSGTSEKKTSFFGKRASNGTARTSQYGAFGGTEKIKDPRPLHDKAFIQQCIRQLCEFLNENGYSQALTVKSLQGPSTKDFLKIFAFIYTFICPNYENPESKFEEEIPRIFKELGYPFALSKSSMYTVGAPHTWPQIVAALVWLIDCVKLCCVLRSENPVFEDPPMGEQSENGIDFNQLFLDYTVRCYDQFMEGRDTFEEYDTDVCIRLKEAYHVDESNLEALQQESRRLMEEIERLEKEKENEPDRLASMRKLKASLQADIQKYQNYLTEIESHSTLLDQRVSSISEELEATELESRAIQQENLRLKNILDNQKYSVADIERIKYEETELQQTIAKLTKDLDEDKQQLWHEELKYAKMKESVETQLSEFHKIGRKVRLIPPTAEFANGYDFQIQCNLDSEQSSLMHYRNKINVPLVEILSQSEGHIASSTNKKMGVEDMVEQLNTLIGEKKNEVKVQKDEAQKLEEIYQQKVEESEEHEKRWISEIESLEKHRQLLESGVNKSLDEAMKDLQKEQQELQLVEHRTEEEMRQVENKLVRVVHAVANHVAVIEKHLEEKRLKVEREYEEFMKEDLLLDLRELLEKYKEKARVLDSL</sequence>
<feature type="chain" id="PRO_0000249555" description="Kinetochore protein NDC80 homolog">
    <location>
        <begin position="1"/>
        <end position="638"/>
    </location>
</feature>
<feature type="region of interest" description="Disordered" evidence="3">
    <location>
        <begin position="1"/>
        <end position="55"/>
    </location>
</feature>
<feature type="coiled-coil region" evidence="2">
    <location>
        <begin position="249"/>
        <end position="394"/>
    </location>
</feature>
<feature type="coiled-coil region" evidence="2">
    <location>
        <begin position="479"/>
        <end position="638"/>
    </location>
</feature>
<feature type="compositionally biased region" description="Polar residues" evidence="3">
    <location>
        <begin position="1"/>
        <end position="11"/>
    </location>
</feature>
<feature type="sequence conflict" description="In Ref. 1; AAN87031." evidence="8" ref="1">
    <original>Q</original>
    <variation>R</variation>
    <location>
        <position position="345"/>
    </location>
</feature>
<name>NDC80_XENLA</name>
<dbReference type="EMBL" id="AY168013">
    <property type="protein sequence ID" value="AAN87031.1"/>
    <property type="molecule type" value="mRNA"/>
</dbReference>
<dbReference type="EMBL" id="BC070725">
    <property type="protein sequence ID" value="AAH70725.1"/>
    <property type="molecule type" value="mRNA"/>
</dbReference>
<dbReference type="RefSeq" id="NP_001082372.1">
    <property type="nucleotide sequence ID" value="NM_001088903.1"/>
</dbReference>
<dbReference type="RefSeq" id="XP_018103626.1">
    <property type="nucleotide sequence ID" value="XM_018248137.1"/>
</dbReference>
<dbReference type="SMR" id="Q8AWF5"/>
<dbReference type="IntAct" id="Q8AWF5">
    <property type="interactions" value="6"/>
</dbReference>
<dbReference type="DNASU" id="398429"/>
<dbReference type="GeneID" id="398429"/>
<dbReference type="KEGG" id="xla:398429"/>
<dbReference type="AGR" id="Xenbase:XB-GENE-997357"/>
<dbReference type="CTD" id="398429"/>
<dbReference type="Xenbase" id="XB-GENE-997357">
    <property type="gene designation" value="ndc80.S"/>
</dbReference>
<dbReference type="OMA" id="PSHKFQK"/>
<dbReference type="OrthoDB" id="7459479at2759"/>
<dbReference type="Proteomes" id="UP000186698">
    <property type="component" value="Chromosome 2S"/>
</dbReference>
<dbReference type="Bgee" id="398429">
    <property type="expression patterns" value="Expressed in egg cell and 19 other cell types or tissues"/>
</dbReference>
<dbReference type="GO" id="GO:0000776">
    <property type="term" value="C:kinetochore"/>
    <property type="evidence" value="ECO:0000250"/>
    <property type="project" value="UniProtKB"/>
</dbReference>
<dbReference type="GO" id="GO:0031262">
    <property type="term" value="C:Ndc80 complex"/>
    <property type="evidence" value="ECO:0000250"/>
    <property type="project" value="UniProtKB"/>
</dbReference>
<dbReference type="GO" id="GO:0005634">
    <property type="term" value="C:nucleus"/>
    <property type="evidence" value="ECO:0007669"/>
    <property type="project" value="UniProtKB-SubCell"/>
</dbReference>
<dbReference type="GO" id="GO:0140483">
    <property type="term" value="F:kinetochore adaptor activity"/>
    <property type="evidence" value="ECO:0000250"/>
    <property type="project" value="UniProtKB"/>
</dbReference>
<dbReference type="GO" id="GO:0008017">
    <property type="term" value="F:microtubule binding"/>
    <property type="evidence" value="ECO:0000250"/>
    <property type="project" value="UniProtKB"/>
</dbReference>
<dbReference type="GO" id="GO:0051315">
    <property type="term" value="P:attachment of mitotic spindle microtubules to kinetochore"/>
    <property type="evidence" value="ECO:0000250"/>
    <property type="project" value="UniProtKB"/>
</dbReference>
<dbReference type="GO" id="GO:0051301">
    <property type="term" value="P:cell division"/>
    <property type="evidence" value="ECO:0007669"/>
    <property type="project" value="UniProtKB-KW"/>
</dbReference>
<dbReference type="GO" id="GO:0007059">
    <property type="term" value="P:chromosome segregation"/>
    <property type="evidence" value="ECO:0000250"/>
    <property type="project" value="UniProtKB"/>
</dbReference>
<dbReference type="GO" id="GO:0051310">
    <property type="term" value="P:metaphase chromosome alignment"/>
    <property type="evidence" value="ECO:0000250"/>
    <property type="project" value="UniProtKB"/>
</dbReference>
<dbReference type="GO" id="GO:0007052">
    <property type="term" value="P:mitotic spindle organization"/>
    <property type="evidence" value="ECO:0000250"/>
    <property type="project" value="UniProtKB"/>
</dbReference>
<dbReference type="GO" id="GO:0090267">
    <property type="term" value="P:positive regulation of mitotic cell cycle spindle assembly checkpoint"/>
    <property type="evidence" value="ECO:0000250"/>
    <property type="project" value="UniProtKB"/>
</dbReference>
<dbReference type="FunFam" id="1.10.418.30:FF:000002">
    <property type="entry name" value="NDC80, kinetochore complex component"/>
    <property type="match status" value="1"/>
</dbReference>
<dbReference type="Gene3D" id="6.10.250.1950">
    <property type="match status" value="1"/>
</dbReference>
<dbReference type="Gene3D" id="1.10.418.30">
    <property type="entry name" value="Ncd80 complex, Ncd80 subunit"/>
    <property type="match status" value="1"/>
</dbReference>
<dbReference type="InterPro" id="IPR040967">
    <property type="entry name" value="DUF5595"/>
</dbReference>
<dbReference type="InterPro" id="IPR005550">
    <property type="entry name" value="Kinetochore_Ndc80"/>
</dbReference>
<dbReference type="InterPro" id="IPR055260">
    <property type="entry name" value="Ndc80_CH"/>
</dbReference>
<dbReference type="InterPro" id="IPR038273">
    <property type="entry name" value="Ndc80_sf"/>
</dbReference>
<dbReference type="PANTHER" id="PTHR10643">
    <property type="entry name" value="KINETOCHORE PROTEIN NDC80"/>
    <property type="match status" value="1"/>
</dbReference>
<dbReference type="PANTHER" id="PTHR10643:SF2">
    <property type="entry name" value="KINETOCHORE PROTEIN NDC80 HOMOLOG"/>
    <property type="match status" value="1"/>
</dbReference>
<dbReference type="Pfam" id="PF18077">
    <property type="entry name" value="DUF5595"/>
    <property type="match status" value="1"/>
</dbReference>
<dbReference type="Pfam" id="PF03801">
    <property type="entry name" value="Ndc80_HEC"/>
    <property type="match status" value="1"/>
</dbReference>
<dbReference type="Pfam" id="PF24487">
    <property type="entry name" value="NDC80_loop"/>
    <property type="match status" value="1"/>
</dbReference>
<keyword id="KW-0131">Cell cycle</keyword>
<keyword id="KW-0132">Cell division</keyword>
<keyword id="KW-0137">Centromere</keyword>
<keyword id="KW-0158">Chromosome</keyword>
<keyword id="KW-0175">Coiled coil</keyword>
<keyword id="KW-0995">Kinetochore</keyword>
<keyword id="KW-0498">Mitosis</keyword>
<keyword id="KW-0539">Nucleus</keyword>
<keyword id="KW-1185">Reference proteome</keyword>
<comment type="function">
    <text evidence="1 4 5">Acts as a component of the essential kinetochore-associated NDC80 complex, which is required for chromosome segregation and spindle checkpoint activity (PubMed:12514103, PubMed:14738735). Required for kinetochore integrity and the organization of stable microtubule binding sites in the outer plate of the kinetochore. The NDC80 complex synergistically enhances the affinity of the SKA1 complex for microtubules and may allow the NDC80 complex to track depolymerizing microtubules. May play a role in chromosome congression and may be essential for the end-on attachment of the kinetochores to spindle microtubules (By similarity).</text>
</comment>
<comment type="subunit">
    <text evidence="4 5 6 7">Component of the NDC80 complex, which is composed of ndc80, cdca1, spbc24 and spbc25. The NDC80 complex interacts with mis12 and zwint. Interacts with cep57r.</text>
</comment>
<comment type="interaction">
    <interactant intactId="EBI-1000337">
        <id>Q8AWF5</id>
    </interactant>
    <interactant intactId="EBI-1000342">
        <id>Q8AWF4</id>
        <label>nuf2-a</label>
    </interactant>
    <organismsDiffer>false</organismsDiffer>
    <experiments>8</experiments>
</comment>
<comment type="subcellular location">
    <subcellularLocation>
        <location evidence="4">Nucleus</location>
    </subcellularLocation>
    <subcellularLocation>
        <location evidence="4">Chromosome</location>
        <location evidence="4">Centromere</location>
        <location evidence="4">Kinetochore</location>
    </subcellularLocation>
    <text evidence="4">Localizes to kinetochores from late prophase to anaphase.</text>
</comment>
<comment type="similarity">
    <text evidence="8">Belongs to the NDC80/HEC1 family.</text>
</comment>
<gene>
    <name type="primary">ndc80</name>
    <name type="synonym">kntc2</name>
</gene>
<evidence type="ECO:0000250" key="1">
    <source>
        <dbReference type="UniProtKB" id="O14777"/>
    </source>
</evidence>
<evidence type="ECO:0000255" key="2"/>
<evidence type="ECO:0000256" key="3">
    <source>
        <dbReference type="SAM" id="MobiDB-lite"/>
    </source>
</evidence>
<evidence type="ECO:0000269" key="4">
    <source>
    </source>
</evidence>
<evidence type="ECO:0000269" key="5">
    <source>
    </source>
</evidence>
<evidence type="ECO:0000269" key="6">
    <source>
    </source>
</evidence>
<evidence type="ECO:0000269" key="7">
    <source>
    </source>
</evidence>
<evidence type="ECO:0000305" key="8"/>
<proteinExistence type="evidence at protein level"/>
<protein>
    <recommendedName>
        <fullName>Kinetochore protein NDC80 homolog</fullName>
    </recommendedName>
    <alternativeName>
        <fullName>Kinetochore protein Hec1</fullName>
    </alternativeName>
    <alternativeName>
        <fullName>Kinetochore-associated protein 2</fullName>
        <shortName>xNdc80</shortName>
    </alternativeName>
</protein>